<reference key="1">
    <citation type="journal article" date="2005" name="J. Bacteriol.">
        <title>Insights into genome plasticity and pathogenicity of the plant pathogenic Bacterium Xanthomonas campestris pv. vesicatoria revealed by the complete genome sequence.</title>
        <authorList>
            <person name="Thieme F."/>
            <person name="Koebnik R."/>
            <person name="Bekel T."/>
            <person name="Berger C."/>
            <person name="Boch J."/>
            <person name="Buettner D."/>
            <person name="Caldana C."/>
            <person name="Gaigalat L."/>
            <person name="Goesmann A."/>
            <person name="Kay S."/>
            <person name="Kirchner O."/>
            <person name="Lanz C."/>
            <person name="Linke B."/>
            <person name="McHardy A.C."/>
            <person name="Meyer F."/>
            <person name="Mittenhuber G."/>
            <person name="Nies D.H."/>
            <person name="Niesbach-Kloesgen U."/>
            <person name="Patschkowski T."/>
            <person name="Rueckert C."/>
            <person name="Rupp O."/>
            <person name="Schneiker S."/>
            <person name="Schuster S.C."/>
            <person name="Vorhoelter F.J."/>
            <person name="Weber E."/>
            <person name="Puehler A."/>
            <person name="Bonas U."/>
            <person name="Bartels D."/>
            <person name="Kaiser O."/>
        </authorList>
    </citation>
    <scope>NUCLEOTIDE SEQUENCE [LARGE SCALE GENOMIC DNA]</scope>
    <source>
        <strain>85-10</strain>
    </source>
</reference>
<name>MSRQ_XANE5</name>
<accession>Q3BUZ5</accession>
<proteinExistence type="inferred from homology"/>
<sequence length="218" mass="24755">MAKTSTSVIAAKTLVHAAALAPIALLGWQFWQVWQGGSDALGADPVAEIEHRTGLWALRFLLITLAITPLRQLTGQAVVIRFRRMLGLYAFFYASVHLAAYLTLDLRGFWTQIFEEILKRPYITVGFAAWLLLMPLAITSTQGWMRRLKRNWGRLHTLIYPIGLLAVLHFWWLVKSDIREPALYAGILAVLLGWRVWKKLSARRTTARRSTPPPATPR</sequence>
<gene>
    <name evidence="1" type="primary">msrQ</name>
    <name type="ordered locus">XCV1687</name>
</gene>
<keyword id="KW-0997">Cell inner membrane</keyword>
<keyword id="KW-1003">Cell membrane</keyword>
<keyword id="KW-0249">Electron transport</keyword>
<keyword id="KW-0285">Flavoprotein</keyword>
<keyword id="KW-0288">FMN</keyword>
<keyword id="KW-0349">Heme</keyword>
<keyword id="KW-0408">Iron</keyword>
<keyword id="KW-0472">Membrane</keyword>
<keyword id="KW-0479">Metal-binding</keyword>
<keyword id="KW-0812">Transmembrane</keyword>
<keyword id="KW-1133">Transmembrane helix</keyword>
<keyword id="KW-0813">Transport</keyword>
<protein>
    <recommendedName>
        <fullName evidence="1">Protein-methionine-sulfoxide reductase heme-binding subunit MsrQ</fullName>
    </recommendedName>
    <alternativeName>
        <fullName evidence="1">Flavocytochrome MsrQ</fullName>
    </alternativeName>
</protein>
<feature type="chain" id="PRO_1000066189" description="Protein-methionine-sulfoxide reductase heme-binding subunit MsrQ">
    <location>
        <begin position="1"/>
        <end position="218"/>
    </location>
</feature>
<feature type="transmembrane region" description="Helical" evidence="1">
    <location>
        <begin position="14"/>
        <end position="34"/>
    </location>
</feature>
<feature type="transmembrane region" description="Helical" evidence="1">
    <location>
        <begin position="60"/>
        <end position="80"/>
    </location>
</feature>
<feature type="transmembrane region" description="Helical" evidence="1">
    <location>
        <begin position="86"/>
        <end position="106"/>
    </location>
</feature>
<feature type="transmembrane region" description="Helical" evidence="1">
    <location>
        <begin position="121"/>
        <end position="141"/>
    </location>
</feature>
<feature type="transmembrane region" description="Helical" evidence="1">
    <location>
        <begin position="155"/>
        <end position="175"/>
    </location>
</feature>
<dbReference type="EMBL" id="AM039952">
    <property type="protein sequence ID" value="CAJ23364.1"/>
    <property type="molecule type" value="Genomic_DNA"/>
</dbReference>
<dbReference type="RefSeq" id="WP_011347044.1">
    <property type="nucleotide sequence ID" value="NZ_CP017190.1"/>
</dbReference>
<dbReference type="SMR" id="Q3BUZ5"/>
<dbReference type="STRING" id="456327.BJD11_14145"/>
<dbReference type="KEGG" id="xcv:XCV1687"/>
<dbReference type="eggNOG" id="COG2717">
    <property type="taxonomic scope" value="Bacteria"/>
</dbReference>
<dbReference type="HOGENOM" id="CLU_080662_0_1_6"/>
<dbReference type="Proteomes" id="UP000007069">
    <property type="component" value="Chromosome"/>
</dbReference>
<dbReference type="GO" id="GO:0005886">
    <property type="term" value="C:plasma membrane"/>
    <property type="evidence" value="ECO:0007669"/>
    <property type="project" value="UniProtKB-SubCell"/>
</dbReference>
<dbReference type="GO" id="GO:0009055">
    <property type="term" value="F:electron transfer activity"/>
    <property type="evidence" value="ECO:0007669"/>
    <property type="project" value="UniProtKB-UniRule"/>
</dbReference>
<dbReference type="GO" id="GO:0010181">
    <property type="term" value="F:FMN binding"/>
    <property type="evidence" value="ECO:0007669"/>
    <property type="project" value="UniProtKB-UniRule"/>
</dbReference>
<dbReference type="GO" id="GO:0020037">
    <property type="term" value="F:heme binding"/>
    <property type="evidence" value="ECO:0007669"/>
    <property type="project" value="UniProtKB-UniRule"/>
</dbReference>
<dbReference type="GO" id="GO:0046872">
    <property type="term" value="F:metal ion binding"/>
    <property type="evidence" value="ECO:0007669"/>
    <property type="project" value="UniProtKB-KW"/>
</dbReference>
<dbReference type="GO" id="GO:0016679">
    <property type="term" value="F:oxidoreductase activity, acting on diphenols and related substances as donors"/>
    <property type="evidence" value="ECO:0007669"/>
    <property type="project" value="TreeGrafter"/>
</dbReference>
<dbReference type="GO" id="GO:0030091">
    <property type="term" value="P:protein repair"/>
    <property type="evidence" value="ECO:0007669"/>
    <property type="project" value="UniProtKB-UniRule"/>
</dbReference>
<dbReference type="HAMAP" id="MF_01207">
    <property type="entry name" value="MsrQ"/>
    <property type="match status" value="1"/>
</dbReference>
<dbReference type="InterPro" id="IPR013130">
    <property type="entry name" value="Fe3_Rdtase_TM_dom"/>
</dbReference>
<dbReference type="InterPro" id="IPR022837">
    <property type="entry name" value="MsrQ-like"/>
</dbReference>
<dbReference type="NCBIfam" id="NF003835">
    <property type="entry name" value="PRK05419.2-2"/>
    <property type="match status" value="1"/>
</dbReference>
<dbReference type="PANTHER" id="PTHR36964">
    <property type="entry name" value="PROTEIN-METHIONINE-SULFOXIDE REDUCTASE HEME-BINDING SUBUNIT MSRQ"/>
    <property type="match status" value="1"/>
</dbReference>
<dbReference type="PANTHER" id="PTHR36964:SF1">
    <property type="entry name" value="PROTEIN-METHIONINE-SULFOXIDE REDUCTASE HEME-BINDING SUBUNIT MSRQ"/>
    <property type="match status" value="1"/>
</dbReference>
<dbReference type="Pfam" id="PF01794">
    <property type="entry name" value="Ferric_reduct"/>
    <property type="match status" value="1"/>
</dbReference>
<organism>
    <name type="scientific">Xanthomonas euvesicatoria pv. vesicatoria (strain 85-10)</name>
    <name type="common">Xanthomonas campestris pv. vesicatoria</name>
    <dbReference type="NCBI Taxonomy" id="316273"/>
    <lineage>
        <taxon>Bacteria</taxon>
        <taxon>Pseudomonadati</taxon>
        <taxon>Pseudomonadota</taxon>
        <taxon>Gammaproteobacteria</taxon>
        <taxon>Lysobacterales</taxon>
        <taxon>Lysobacteraceae</taxon>
        <taxon>Xanthomonas</taxon>
    </lineage>
</organism>
<comment type="function">
    <text evidence="1">Part of the MsrPQ system that repairs oxidized periplasmic proteins containing methionine sulfoxide residues (Met-O), using respiratory chain electrons. Thus protects these proteins from oxidative-stress damage caused by reactive species of oxygen and chlorine generated by the host defense mechanisms. MsrPQ is essential for the maintenance of envelope integrity under bleach stress, rescuing a wide series of structurally unrelated periplasmic proteins from methionine oxidation. MsrQ provides electrons for reduction to the reductase catalytic subunit MsrP, using the quinone pool of the respiratory chain.</text>
</comment>
<comment type="cofactor">
    <cofactor evidence="1">
        <name>FMN</name>
        <dbReference type="ChEBI" id="CHEBI:58210"/>
    </cofactor>
    <text evidence="1">Binds 1 FMN per subunit.</text>
</comment>
<comment type="cofactor">
    <cofactor evidence="1">
        <name>heme b</name>
        <dbReference type="ChEBI" id="CHEBI:60344"/>
    </cofactor>
    <text evidence="1">Binds 1 heme b (iron(II)-protoporphyrin IX) group per subunit.</text>
</comment>
<comment type="subunit">
    <text evidence="1">Heterodimer of a catalytic subunit (MsrP) and a heme-binding subunit (MsrQ).</text>
</comment>
<comment type="subcellular location">
    <subcellularLocation>
        <location evidence="1">Cell inner membrane</location>
        <topology evidence="1">Multi-pass membrane protein</topology>
    </subcellularLocation>
</comment>
<comment type="similarity">
    <text evidence="1">Belongs to the MsrQ family.</text>
</comment>
<evidence type="ECO:0000255" key="1">
    <source>
        <dbReference type="HAMAP-Rule" id="MF_01207"/>
    </source>
</evidence>